<gene>
    <name type="primary">rps12-A</name>
</gene>
<gene>
    <name type="primary">rps12-B</name>
</gene>
<name>RR12_MAIZE</name>
<geneLocation type="chloroplast"/>
<feature type="chain" id="PRO_0000146406" description="Small ribosomal subunit protein uS12cz/uS12cy">
    <location>
        <begin position="1"/>
        <end position="124"/>
    </location>
</feature>
<sequence length="124" mass="13822">MPTVKQLIRNARQPIRNARKSAALKGCPQRRGTCARVYTINPKKPNSALRKVARVRLTSGFEITAYIPGIGHNLQEHSVVLVRGGRVKDLPGVRYRIIRGTLDAVAVKNRQQGRSKYGAKKPKK</sequence>
<accession>P12340</accession>
<keyword id="KW-0150">Chloroplast</keyword>
<keyword id="KW-0934">Plastid</keyword>
<keyword id="KW-1185">Reference proteome</keyword>
<keyword id="KW-0687">Ribonucleoprotein</keyword>
<keyword id="KW-0689">Ribosomal protein</keyword>
<keyword id="KW-0694">RNA-binding</keyword>
<keyword id="KW-0699">rRNA-binding</keyword>
<evidence type="ECO:0000250" key="1"/>
<evidence type="ECO:0000255" key="2">
    <source>
        <dbReference type="HAMAP-Rule" id="MF_00403"/>
    </source>
</evidence>
<evidence type="ECO:0000305" key="3"/>
<proteinExistence type="inferred from homology"/>
<reference key="1">
    <citation type="journal article" date="1987" name="J. Biol. Chem.">
        <title>Nucleotide sequence, promoter analysis, and linkage mapping of the unusually organized operon encoding ribosomal proteins S7 and S12 in maize chloroplast.</title>
        <authorList>
            <person name="Giese K."/>
            <person name="Subramanian A.R."/>
            <person name="Larrinua I.M."/>
            <person name="Bogorad L."/>
        </authorList>
    </citation>
    <scope>NUCLEOTIDE SEQUENCE [LARGE SCALE GENOMIC DNA]</scope>
    <source>
        <strain>cv. B73</strain>
        <tissue>Leaf</tissue>
    </source>
</reference>
<reference key="2">
    <citation type="journal article" date="1995" name="J. Mol. Biol.">
        <title>Complete sequence of the maize chloroplast genome: gene content, hotspots of divergence and fine tuning of genetic information by transcript editing.</title>
        <authorList>
            <person name="Maier R.M."/>
            <person name="Neckermann K."/>
            <person name="Igloi G.L."/>
            <person name="Koessel H."/>
        </authorList>
    </citation>
    <scope>NUCLEOTIDE SEQUENCE [LARGE SCALE GENOMIC DNA]</scope>
    <source>
        <strain>cv. B73</strain>
    </source>
</reference>
<reference key="3">
    <citation type="journal article" date="1992" name="Plant Mol. Biol.">
        <title>Nucleotide sequence of a region of maize chloroplast DNA containing the 3' end of clpP, exon 1 of rps12 and rpl20 and their cotranscription.</title>
        <authorList>
            <person name="Weglohner W."/>
            <person name="Subramanian A.R."/>
        </authorList>
    </citation>
    <scope>NUCLEOTIDE SEQUENCE [LARGE SCALE GENOMIC DNA] OF 1-38</scope>
    <source>
        <strain>cv. B73</strain>
        <tissue>Leaf</tissue>
    </source>
</reference>
<protein>
    <recommendedName>
        <fullName evidence="2">Small ribosomal subunit protein uS12cz/uS12cy</fullName>
    </recommendedName>
    <alternativeName>
        <fullName evidence="3">30S ribosomal protein S12, chloroplastic</fullName>
    </alternativeName>
</protein>
<organism>
    <name type="scientific">Zea mays</name>
    <name type="common">Maize</name>
    <dbReference type="NCBI Taxonomy" id="4577"/>
    <lineage>
        <taxon>Eukaryota</taxon>
        <taxon>Viridiplantae</taxon>
        <taxon>Streptophyta</taxon>
        <taxon>Embryophyta</taxon>
        <taxon>Tracheophyta</taxon>
        <taxon>Spermatophyta</taxon>
        <taxon>Magnoliopsida</taxon>
        <taxon>Liliopsida</taxon>
        <taxon>Poales</taxon>
        <taxon>Poaceae</taxon>
        <taxon>PACMAD clade</taxon>
        <taxon>Panicoideae</taxon>
        <taxon>Andropogonodae</taxon>
        <taxon>Andropogoneae</taxon>
        <taxon>Tripsacinae</taxon>
        <taxon>Zea</taxon>
    </lineage>
</organism>
<dbReference type="EMBL" id="M17841">
    <property type="protein sequence ID" value="AAA85359.1"/>
    <property type="molecule type" value="Genomic_DNA"/>
</dbReference>
<dbReference type="EMBL" id="M17842">
    <property type="protein sequence ID" value="AAA85359.1"/>
    <property type="status" value="JOINED"/>
    <property type="molecule type" value="Genomic_DNA"/>
</dbReference>
<dbReference type="EMBL" id="X86563">
    <property type="protein sequence ID" value="CAA60309.1"/>
    <property type="molecule type" value="Genomic_DNA"/>
</dbReference>
<dbReference type="EMBL" id="X60548">
    <property type="protein sequence ID" value="CAA43039.1"/>
    <property type="molecule type" value="Genomic_DNA"/>
</dbReference>
<dbReference type="PIR" id="S58629">
    <property type="entry name" value="S58629"/>
</dbReference>
<dbReference type="SMR" id="P12340"/>
<dbReference type="FunCoup" id="P12340">
    <property type="interactions" value="1022"/>
</dbReference>
<dbReference type="STRING" id="4577.P12340"/>
<dbReference type="PaxDb" id="4577-GRMZM2G170878_P01"/>
<dbReference type="KEGG" id="zma:1466374"/>
<dbReference type="MaizeGDB" id="67069"/>
<dbReference type="eggNOG" id="KOG1750">
    <property type="taxonomic scope" value="Eukaryota"/>
</dbReference>
<dbReference type="InParanoid" id="P12340"/>
<dbReference type="OrthoDB" id="653404at2759"/>
<dbReference type="BRENDA" id="3.4.21.92">
    <property type="organism ID" value="6752"/>
</dbReference>
<dbReference type="Proteomes" id="UP000007305">
    <property type="component" value="Chloroplast"/>
</dbReference>
<dbReference type="GO" id="GO:0009507">
    <property type="term" value="C:chloroplast"/>
    <property type="evidence" value="ECO:0007669"/>
    <property type="project" value="UniProtKB-SubCell"/>
</dbReference>
<dbReference type="GO" id="GO:0005840">
    <property type="term" value="C:ribosome"/>
    <property type="evidence" value="ECO:0000318"/>
    <property type="project" value="GO_Central"/>
</dbReference>
<dbReference type="GO" id="GO:0015935">
    <property type="term" value="C:small ribosomal subunit"/>
    <property type="evidence" value="ECO:0007669"/>
    <property type="project" value="InterPro"/>
</dbReference>
<dbReference type="GO" id="GO:0019843">
    <property type="term" value="F:rRNA binding"/>
    <property type="evidence" value="ECO:0007669"/>
    <property type="project" value="UniProtKB-UniRule"/>
</dbReference>
<dbReference type="GO" id="GO:0003735">
    <property type="term" value="F:structural constituent of ribosome"/>
    <property type="evidence" value="ECO:0000318"/>
    <property type="project" value="GO_Central"/>
</dbReference>
<dbReference type="GO" id="GO:0006412">
    <property type="term" value="P:translation"/>
    <property type="evidence" value="ECO:0000318"/>
    <property type="project" value="GO_Central"/>
</dbReference>
<dbReference type="CDD" id="cd03368">
    <property type="entry name" value="Ribosomal_S12"/>
    <property type="match status" value="1"/>
</dbReference>
<dbReference type="FunFam" id="2.40.50.140:FF:000008">
    <property type="entry name" value="30S ribosomal protein S12, chloroplastic"/>
    <property type="match status" value="1"/>
</dbReference>
<dbReference type="Gene3D" id="2.40.50.140">
    <property type="entry name" value="Nucleic acid-binding proteins"/>
    <property type="match status" value="1"/>
</dbReference>
<dbReference type="HAMAP" id="MF_00403_B">
    <property type="entry name" value="Ribosomal_uS12_B"/>
    <property type="match status" value="1"/>
</dbReference>
<dbReference type="InterPro" id="IPR012340">
    <property type="entry name" value="NA-bd_OB-fold"/>
</dbReference>
<dbReference type="InterPro" id="IPR006032">
    <property type="entry name" value="Ribosomal_uS12"/>
</dbReference>
<dbReference type="InterPro" id="IPR005679">
    <property type="entry name" value="Ribosomal_uS12_bac"/>
</dbReference>
<dbReference type="NCBIfam" id="TIGR00981">
    <property type="entry name" value="rpsL_bact"/>
    <property type="match status" value="1"/>
</dbReference>
<dbReference type="PANTHER" id="PTHR11652">
    <property type="entry name" value="30S RIBOSOMAL PROTEIN S12 FAMILY MEMBER"/>
    <property type="match status" value="1"/>
</dbReference>
<dbReference type="Pfam" id="PF00164">
    <property type="entry name" value="Ribosom_S12_S23"/>
    <property type="match status" value="1"/>
</dbReference>
<dbReference type="PIRSF" id="PIRSF002133">
    <property type="entry name" value="Ribosomal_S12/S23"/>
    <property type="match status" value="1"/>
</dbReference>
<dbReference type="PRINTS" id="PR01034">
    <property type="entry name" value="RIBOSOMALS12"/>
</dbReference>
<dbReference type="SUPFAM" id="SSF50249">
    <property type="entry name" value="Nucleic acid-binding proteins"/>
    <property type="match status" value="1"/>
</dbReference>
<dbReference type="PROSITE" id="PS00055">
    <property type="entry name" value="RIBOSOMAL_S12"/>
    <property type="match status" value="1"/>
</dbReference>
<comment type="function">
    <text evidence="1">With S4 and S5 plays an important role in translational accuracy. Located at the interface of the 30S and 50S subunits (By similarity).</text>
</comment>
<comment type="subunit">
    <text>Part of the 30S ribosomal subunit.</text>
</comment>
<comment type="subcellular location">
    <subcellularLocation>
        <location>Plastid</location>
        <location>Chloroplast</location>
    </subcellularLocation>
</comment>
<comment type="similarity">
    <text evidence="3">Belongs to the universal ribosomal protein uS12 family.</text>
</comment>